<name>RBM5_MOUSE</name>
<dbReference type="EMBL" id="AJ309168">
    <property type="protein sequence ID" value="CAC69136.1"/>
    <property type="molecule type" value="mRNA"/>
</dbReference>
<dbReference type="EMBL" id="AK134183">
    <property type="protein sequence ID" value="BAE22042.1"/>
    <property type="molecule type" value="mRNA"/>
</dbReference>
<dbReference type="EMBL" id="AK146880">
    <property type="protein sequence ID" value="BAE27501.1"/>
    <property type="molecule type" value="mRNA"/>
</dbReference>
<dbReference type="EMBL" id="BC003988">
    <property type="protein sequence ID" value="AAH03988.1"/>
    <property type="molecule type" value="mRNA"/>
</dbReference>
<dbReference type="EMBL" id="BC023854">
    <property type="protein sequence ID" value="AAH23854.1"/>
    <property type="molecule type" value="mRNA"/>
</dbReference>
<dbReference type="EMBL" id="BC031899">
    <property type="protein sequence ID" value="AAH31899.1"/>
    <property type="molecule type" value="mRNA"/>
</dbReference>
<dbReference type="EMBL" id="BC043058">
    <property type="protein sequence ID" value="AAH43058.1"/>
    <property type="molecule type" value="mRNA"/>
</dbReference>
<dbReference type="EMBL" id="BC054729">
    <property type="protein sequence ID" value="AAH54729.1"/>
    <property type="molecule type" value="mRNA"/>
</dbReference>
<dbReference type="CCDS" id="CCDS23506.1">
    <molecule id="Q91YE7-1"/>
</dbReference>
<dbReference type="CCDS" id="CCDS90660.1">
    <molecule id="Q91YE7-2"/>
</dbReference>
<dbReference type="RefSeq" id="NP_001346453.1">
    <molecule id="Q91YE7-2"/>
    <property type="nucleotide sequence ID" value="NM_001359524.2"/>
</dbReference>
<dbReference type="RefSeq" id="NP_001346454.1">
    <molecule id="Q91YE7-1"/>
    <property type="nucleotide sequence ID" value="NM_001359525.2"/>
</dbReference>
<dbReference type="RefSeq" id="NP_001346455.1">
    <molecule id="Q91YE7-1"/>
    <property type="nucleotide sequence ID" value="NM_001359526.2"/>
</dbReference>
<dbReference type="RefSeq" id="NP_683732.1">
    <molecule id="Q91YE7-1"/>
    <property type="nucleotide sequence ID" value="NM_148930.4"/>
</dbReference>
<dbReference type="RefSeq" id="XP_006511933.1">
    <property type="nucleotide sequence ID" value="XM_006511870.3"/>
</dbReference>
<dbReference type="RefSeq" id="XP_006511934.1">
    <property type="nucleotide sequence ID" value="XM_006511871.3"/>
</dbReference>
<dbReference type="RefSeq" id="XP_006511935.1">
    <molecule id="Q91YE7-1"/>
    <property type="nucleotide sequence ID" value="XM_006511872.3"/>
</dbReference>
<dbReference type="RefSeq" id="XP_011241223.1">
    <property type="nucleotide sequence ID" value="XM_011242921.2"/>
</dbReference>
<dbReference type="PDB" id="2CLV">
    <property type="method" value="X-ray"/>
    <property type="resolution" value="1.90 A"/>
    <property type="chains" value="C/M=484-491"/>
</dbReference>
<dbReference type="PDB" id="2OL3">
    <property type="method" value="X-ray"/>
    <property type="resolution" value="2.90 A"/>
    <property type="chains" value="P=484-491"/>
</dbReference>
<dbReference type="PDBsum" id="2CLV"/>
<dbReference type="PDBsum" id="2OL3"/>
<dbReference type="BMRB" id="Q91YE7"/>
<dbReference type="SMR" id="Q91YE7"/>
<dbReference type="BioGRID" id="219933">
    <property type="interactions" value="5"/>
</dbReference>
<dbReference type="FunCoup" id="Q91YE7">
    <property type="interactions" value="5411"/>
</dbReference>
<dbReference type="IntAct" id="Q91YE7">
    <property type="interactions" value="3"/>
</dbReference>
<dbReference type="MINT" id="Q91YE7"/>
<dbReference type="STRING" id="10090.ENSMUSP00000138379"/>
<dbReference type="iPTMnet" id="Q91YE7"/>
<dbReference type="PhosphoSitePlus" id="Q91YE7"/>
<dbReference type="SwissPalm" id="Q91YE7"/>
<dbReference type="jPOST" id="Q91YE7"/>
<dbReference type="PaxDb" id="10090-ENSMUSP00000138379"/>
<dbReference type="PeptideAtlas" id="Q91YE7"/>
<dbReference type="ProteomicsDB" id="300323">
    <molecule id="Q91YE7-1"/>
</dbReference>
<dbReference type="ProteomicsDB" id="300324">
    <molecule id="Q91YE7-2"/>
</dbReference>
<dbReference type="Pumba" id="Q91YE7"/>
<dbReference type="Antibodypedia" id="1962">
    <property type="antibodies" value="254 antibodies from 30 providers"/>
</dbReference>
<dbReference type="DNASU" id="83486"/>
<dbReference type="Ensembl" id="ENSMUST00000035199.13">
    <molecule id="Q91YE7-2"/>
    <property type="protein sequence ID" value="ENSMUSP00000035199.7"/>
    <property type="gene ID" value="ENSMUSG00000032580.13"/>
</dbReference>
<dbReference type="Ensembl" id="ENSMUST00000182659.8">
    <molecule id="Q91YE7-1"/>
    <property type="protein sequence ID" value="ENSMUSP00000138379.2"/>
    <property type="gene ID" value="ENSMUSG00000032580.13"/>
</dbReference>
<dbReference type="GeneID" id="83486"/>
<dbReference type="KEGG" id="mmu:83486"/>
<dbReference type="UCSC" id="uc009rmv.2">
    <molecule id="Q91YE7-2"/>
    <property type="organism name" value="mouse"/>
</dbReference>
<dbReference type="UCSC" id="uc009rmw.2">
    <molecule id="Q91YE7-1"/>
    <property type="organism name" value="mouse"/>
</dbReference>
<dbReference type="AGR" id="MGI:1933204"/>
<dbReference type="CTD" id="10181"/>
<dbReference type="MGI" id="MGI:1933204">
    <property type="gene designation" value="Rbm5"/>
</dbReference>
<dbReference type="VEuPathDB" id="HostDB:ENSMUSG00000032580"/>
<dbReference type="eggNOG" id="KOG0154">
    <property type="taxonomic scope" value="Eukaryota"/>
</dbReference>
<dbReference type="GeneTree" id="ENSGT00940000156617"/>
<dbReference type="HOGENOM" id="CLU_010527_0_0_1"/>
<dbReference type="InParanoid" id="Q91YE7"/>
<dbReference type="OMA" id="MYDDRSP"/>
<dbReference type="OrthoDB" id="29221at2759"/>
<dbReference type="PhylomeDB" id="Q91YE7"/>
<dbReference type="TreeFam" id="TF315789"/>
<dbReference type="Reactome" id="R-MMU-72163">
    <property type="pathway name" value="mRNA Splicing - Major Pathway"/>
</dbReference>
<dbReference type="BioGRID-ORCS" id="83486">
    <property type="hits" value="5 hits in 82 CRISPR screens"/>
</dbReference>
<dbReference type="ChiTaRS" id="Rbm5">
    <property type="organism name" value="mouse"/>
</dbReference>
<dbReference type="EvolutionaryTrace" id="Q91YE7"/>
<dbReference type="PRO" id="PR:Q91YE7"/>
<dbReference type="Proteomes" id="UP000000589">
    <property type="component" value="Chromosome 9"/>
</dbReference>
<dbReference type="RNAct" id="Q91YE7">
    <property type="molecule type" value="protein"/>
</dbReference>
<dbReference type="Bgee" id="ENSMUSG00000032580">
    <property type="expression patterns" value="Expressed in rostral migratory stream and 258 other cell types or tissues"/>
</dbReference>
<dbReference type="ExpressionAtlas" id="Q91YE7">
    <property type="expression patterns" value="baseline and differential"/>
</dbReference>
<dbReference type="GO" id="GO:0005829">
    <property type="term" value="C:cytosol"/>
    <property type="evidence" value="ECO:0007669"/>
    <property type="project" value="Ensembl"/>
</dbReference>
<dbReference type="GO" id="GO:0005654">
    <property type="term" value="C:nucleoplasm"/>
    <property type="evidence" value="ECO:0007669"/>
    <property type="project" value="Ensembl"/>
</dbReference>
<dbReference type="GO" id="GO:0005634">
    <property type="term" value="C:nucleus"/>
    <property type="evidence" value="ECO:0000250"/>
    <property type="project" value="UniProtKB"/>
</dbReference>
<dbReference type="GO" id="GO:0005681">
    <property type="term" value="C:spliceosomal complex"/>
    <property type="evidence" value="ECO:0007669"/>
    <property type="project" value="UniProtKB-KW"/>
</dbReference>
<dbReference type="GO" id="GO:0003729">
    <property type="term" value="F:mRNA binding"/>
    <property type="evidence" value="ECO:0000250"/>
    <property type="project" value="UniProtKB"/>
</dbReference>
<dbReference type="GO" id="GO:0008270">
    <property type="term" value="F:zinc ion binding"/>
    <property type="evidence" value="ECO:0007669"/>
    <property type="project" value="UniProtKB-KW"/>
</dbReference>
<dbReference type="GO" id="GO:0006915">
    <property type="term" value="P:apoptotic process"/>
    <property type="evidence" value="ECO:0007669"/>
    <property type="project" value="UniProtKB-KW"/>
</dbReference>
<dbReference type="GO" id="GO:0043065">
    <property type="term" value="P:positive regulation of apoptotic process"/>
    <property type="evidence" value="ECO:0000250"/>
    <property type="project" value="UniProtKB"/>
</dbReference>
<dbReference type="GO" id="GO:0000381">
    <property type="term" value="P:regulation of alternative mRNA splicing, via spliceosome"/>
    <property type="evidence" value="ECO:0000250"/>
    <property type="project" value="UniProtKB"/>
</dbReference>
<dbReference type="GO" id="GO:0000245">
    <property type="term" value="P:spliceosomal complex assembly"/>
    <property type="evidence" value="ECO:0000250"/>
    <property type="project" value="UniProtKB"/>
</dbReference>
<dbReference type="CDD" id="cd16168">
    <property type="entry name" value="OCRE_RBM5"/>
    <property type="match status" value="1"/>
</dbReference>
<dbReference type="CDD" id="cd12752">
    <property type="entry name" value="RRM1_RBM5"/>
    <property type="match status" value="1"/>
</dbReference>
<dbReference type="CDD" id="cd12755">
    <property type="entry name" value="RRM2_RBM5"/>
    <property type="match status" value="1"/>
</dbReference>
<dbReference type="FunFam" id="3.30.70.330:FF:000515">
    <property type="entry name" value="RNA-binding motif protein 5"/>
    <property type="match status" value="1"/>
</dbReference>
<dbReference type="FunFam" id="3.30.70.330:FF:000114">
    <property type="entry name" value="RNA-binding protein 10 isoform X1"/>
    <property type="match status" value="1"/>
</dbReference>
<dbReference type="Gene3D" id="3.30.70.330">
    <property type="match status" value="2"/>
</dbReference>
<dbReference type="Gene3D" id="4.10.1060.10">
    <property type="entry name" value="Zinc finger, RanBP2-type"/>
    <property type="match status" value="1"/>
</dbReference>
<dbReference type="InterPro" id="IPR000467">
    <property type="entry name" value="G_patch_dom"/>
</dbReference>
<dbReference type="InterPro" id="IPR012677">
    <property type="entry name" value="Nucleotide-bd_a/b_plait_sf"/>
</dbReference>
<dbReference type="InterPro" id="IPR041591">
    <property type="entry name" value="OCRE"/>
</dbReference>
<dbReference type="InterPro" id="IPR035979">
    <property type="entry name" value="RBD_domain_sf"/>
</dbReference>
<dbReference type="InterPro" id="IPR034991">
    <property type="entry name" value="RBM5_RRM1"/>
</dbReference>
<dbReference type="InterPro" id="IPR034993">
    <property type="entry name" value="RBM5_RRM2"/>
</dbReference>
<dbReference type="InterPro" id="IPR000504">
    <property type="entry name" value="RRM_dom"/>
</dbReference>
<dbReference type="InterPro" id="IPR013087">
    <property type="entry name" value="Znf_C2H2_type"/>
</dbReference>
<dbReference type="InterPro" id="IPR001876">
    <property type="entry name" value="Znf_RanBP2"/>
</dbReference>
<dbReference type="InterPro" id="IPR036443">
    <property type="entry name" value="Znf_RanBP2_sf"/>
</dbReference>
<dbReference type="PANTHER" id="PTHR13948">
    <property type="entry name" value="RNA-BINDING PROTEIN"/>
    <property type="match status" value="1"/>
</dbReference>
<dbReference type="PANTHER" id="PTHR13948:SF21">
    <property type="entry name" value="RNA-BINDING PROTEIN 5"/>
    <property type="match status" value="1"/>
</dbReference>
<dbReference type="Pfam" id="PF01585">
    <property type="entry name" value="G-patch"/>
    <property type="match status" value="1"/>
</dbReference>
<dbReference type="Pfam" id="PF17780">
    <property type="entry name" value="OCRE"/>
    <property type="match status" value="1"/>
</dbReference>
<dbReference type="Pfam" id="PF00076">
    <property type="entry name" value="RRM_1"/>
    <property type="match status" value="2"/>
</dbReference>
<dbReference type="Pfam" id="PF00641">
    <property type="entry name" value="Zn_ribbon_RanBP"/>
    <property type="match status" value="1"/>
</dbReference>
<dbReference type="SMART" id="SM00443">
    <property type="entry name" value="G_patch"/>
    <property type="match status" value="1"/>
</dbReference>
<dbReference type="SMART" id="SM00360">
    <property type="entry name" value="RRM"/>
    <property type="match status" value="2"/>
</dbReference>
<dbReference type="SMART" id="SM00547">
    <property type="entry name" value="ZnF_RBZ"/>
    <property type="match status" value="1"/>
</dbReference>
<dbReference type="SUPFAM" id="SSF90209">
    <property type="entry name" value="Ran binding protein zinc finger-like"/>
    <property type="match status" value="1"/>
</dbReference>
<dbReference type="SUPFAM" id="SSF54928">
    <property type="entry name" value="RNA-binding domain, RBD"/>
    <property type="match status" value="2"/>
</dbReference>
<dbReference type="PROSITE" id="PS50174">
    <property type="entry name" value="G_PATCH"/>
    <property type="match status" value="1"/>
</dbReference>
<dbReference type="PROSITE" id="PS50102">
    <property type="entry name" value="RRM"/>
    <property type="match status" value="2"/>
</dbReference>
<dbReference type="PROSITE" id="PS01358">
    <property type="entry name" value="ZF_RANBP2_1"/>
    <property type="match status" value="1"/>
</dbReference>
<dbReference type="PROSITE" id="PS50199">
    <property type="entry name" value="ZF_RANBP2_2"/>
    <property type="match status" value="1"/>
</dbReference>
<dbReference type="PROSITE" id="PS50157">
    <property type="entry name" value="ZINC_FINGER_C2H2_2"/>
    <property type="match status" value="1"/>
</dbReference>
<accession>Q91YE7</accession>
<accession>Q3UZ19</accession>
<accession>Q99KV9</accession>
<comment type="function">
    <text evidence="2">Component of the spliceosome A complex. Binds to ssRNA containing the consensus sequence 5'-AGGUAA-3' (By similarity). Regulates alternative splicing of a number of mRNAs. May modulate splice site pairing after recruitment of the U1 and U2 snRNPs to the 5' and 3' splice sites of the intron. May both positively and negatively regulate apoptosis by regulating the alternative splicing of several genes involved in this process, including FAS and CASP2/caspase-2. In the case of FAS, promotes production of a soluble form of FAS that inhibits apoptosis. In the case of CASP2/caspase-2, promotes production of a catalytically active form of CASP2/Caspase-2 that induces apoptosis (By similarity).</text>
</comment>
<comment type="subunit">
    <text evidence="1">Component of the spliceosome A complex (also known as the prespliceosome). Appears to dissociate from the spliceosome upon formation of the spliceosome B complex (also known as the precatalytic spliceosome), in which the heterotrimeric U4/U6.U5 snRNPs are bound. Interacts with U2AF2; this interaction is direct. Also interacts with ACIN1, PRPF8, SFRS3, SNRPB, SNRPN, SNRNP70 and SNRNP200; these interactions may be indirect (By similarity).</text>
</comment>
<comment type="subcellular location">
    <subcellularLocation>
        <location evidence="1">Nucleus</location>
    </subcellularLocation>
</comment>
<comment type="alternative products">
    <event type="alternative splicing"/>
    <isoform>
        <id>Q91YE7-1</id>
        <name>1</name>
        <sequence type="displayed"/>
    </isoform>
    <isoform>
        <id>Q91YE7-2</id>
        <name>2</name>
        <sequence type="described" ref="VSP_021003"/>
    </isoform>
</comment>
<comment type="similarity">
    <text evidence="9">Belongs to the RBM5/RBM10 family.</text>
</comment>
<gene>
    <name type="primary">Rbm5</name>
    <name type="synonym">Luca15</name>
</gene>
<evidence type="ECO:0000250" key="1"/>
<evidence type="ECO:0000250" key="2">
    <source>
        <dbReference type="UniProtKB" id="P52756"/>
    </source>
</evidence>
<evidence type="ECO:0000255" key="3">
    <source>
        <dbReference type="PROSITE-ProRule" id="PRU00042"/>
    </source>
</evidence>
<evidence type="ECO:0000255" key="4">
    <source>
        <dbReference type="PROSITE-ProRule" id="PRU00092"/>
    </source>
</evidence>
<evidence type="ECO:0000255" key="5">
    <source>
        <dbReference type="PROSITE-ProRule" id="PRU00176"/>
    </source>
</evidence>
<evidence type="ECO:0000255" key="6">
    <source>
        <dbReference type="PROSITE-ProRule" id="PRU00322"/>
    </source>
</evidence>
<evidence type="ECO:0000256" key="7">
    <source>
        <dbReference type="SAM" id="MobiDB-lite"/>
    </source>
</evidence>
<evidence type="ECO:0000303" key="8">
    <source>
    </source>
</evidence>
<evidence type="ECO:0000305" key="9"/>
<evidence type="ECO:0007744" key="10">
    <source>
    </source>
</evidence>
<evidence type="ECO:0007744" key="11">
    <source>
    </source>
</evidence>
<keyword id="KW-0002">3D-structure</keyword>
<keyword id="KW-0025">Alternative splicing</keyword>
<keyword id="KW-0053">Apoptosis</keyword>
<keyword id="KW-0479">Metal-binding</keyword>
<keyword id="KW-0507">mRNA processing</keyword>
<keyword id="KW-0508">mRNA splicing</keyword>
<keyword id="KW-0539">Nucleus</keyword>
<keyword id="KW-0597">Phosphoprotein</keyword>
<keyword id="KW-1185">Reference proteome</keyword>
<keyword id="KW-0677">Repeat</keyword>
<keyword id="KW-0694">RNA-binding</keyword>
<keyword id="KW-0747">Spliceosome</keyword>
<keyword id="KW-0862">Zinc</keyword>
<keyword id="KW-0863">Zinc-finger</keyword>
<sequence length="815" mass="92311">MGSDKRVSRTERSGRYGSIIDRDDRDERESRSRRRDSDYKRSSDDRRGDRYDDYRDYDSPERERERRNSDRSEDGYHSDGDYGEHDYRHDISDERESKTIMLRGLPITITESDIREMMESFEGPQPADVRLMKRKTGVSRGFAFVEFYHLQDATSWMEANQKKLVIQGKHIAMHYSNPRPKFEDWLCNKCCLNNFRKRLKCFRCGADKFDSEQEVPPGTTESAQSVDYYCDTIILRNIAPHTVVDSIMTALSPYASLAVNNIRLIKDKQTQQNRGFAFVQLSSAMDASQLLQILQSLHPPLKIDGKTIGVDFAKSARKDLVLPDGNRVSAFSVASTAIAAAQWSSTQSQSGEGGSVDYSYMQPGQDGYTQYTQYSQDYQQFYQQQAGGLESDTSATSGTTVTTTSAAVVSQSPQLYNQTSNPPGSPTEEAQPSTSTSTQAPAASPTGVVPGTKYAVPDTSTYQYDESSGYYYDPTTGLYYDPNSQYYYNSLTQQYLYWDGEKETYVPAAEASSNQQTGLPSTKEGKEKKEKPKSKTAQQIAKDMERWAKSLNKQKENFKNSFQPVNSLREEERRESAAADAGFALFEKKGALAERQQLLPELVRNGDEENPLKRGLVAAYSGDSDNEEELVERLESEEEKLADWKKMACLLCRRQFPNRDALVRHQQLSDLHKQNMDIYRRSRLSEQELEALELREREMKYRDRAAERREKYGIPEPPEPKRKKQFDAGTVNYEQPTKDGIDHSNIGNKMLQAMGWREGSGLGRKCQGITAPIEAQVRLKGAGLGAKGSAYGLSGADSYKDAVRKAMFARFTEME</sequence>
<reference key="1">
    <citation type="submission" date="2001-04" db="EMBL/GenBank/DDBJ databases">
        <title>Def-3 defines a novel sub-nuclear domain and co-localises with LUCA15.</title>
        <authorList>
            <person name="Heath E."/>
            <person name="Morgan G.T."/>
            <person name="Sablitzky F."/>
        </authorList>
    </citation>
    <scope>NUCLEOTIDE SEQUENCE [MRNA] (ISOFORM 1)</scope>
</reference>
<reference key="2">
    <citation type="journal article" date="2005" name="Science">
        <title>The transcriptional landscape of the mammalian genome.</title>
        <authorList>
            <person name="Carninci P."/>
            <person name="Kasukawa T."/>
            <person name="Katayama S."/>
            <person name="Gough J."/>
            <person name="Frith M.C."/>
            <person name="Maeda N."/>
            <person name="Oyama R."/>
            <person name="Ravasi T."/>
            <person name="Lenhard B."/>
            <person name="Wells C."/>
            <person name="Kodzius R."/>
            <person name="Shimokawa K."/>
            <person name="Bajic V.B."/>
            <person name="Brenner S.E."/>
            <person name="Batalov S."/>
            <person name="Forrest A.R."/>
            <person name="Zavolan M."/>
            <person name="Davis M.J."/>
            <person name="Wilming L.G."/>
            <person name="Aidinis V."/>
            <person name="Allen J.E."/>
            <person name="Ambesi-Impiombato A."/>
            <person name="Apweiler R."/>
            <person name="Aturaliya R.N."/>
            <person name="Bailey T.L."/>
            <person name="Bansal M."/>
            <person name="Baxter L."/>
            <person name="Beisel K.W."/>
            <person name="Bersano T."/>
            <person name="Bono H."/>
            <person name="Chalk A.M."/>
            <person name="Chiu K.P."/>
            <person name="Choudhary V."/>
            <person name="Christoffels A."/>
            <person name="Clutterbuck D.R."/>
            <person name="Crowe M.L."/>
            <person name="Dalla E."/>
            <person name="Dalrymple B.P."/>
            <person name="de Bono B."/>
            <person name="Della Gatta G."/>
            <person name="di Bernardo D."/>
            <person name="Down T."/>
            <person name="Engstrom P."/>
            <person name="Fagiolini M."/>
            <person name="Faulkner G."/>
            <person name="Fletcher C.F."/>
            <person name="Fukushima T."/>
            <person name="Furuno M."/>
            <person name="Futaki S."/>
            <person name="Gariboldi M."/>
            <person name="Georgii-Hemming P."/>
            <person name="Gingeras T.R."/>
            <person name="Gojobori T."/>
            <person name="Green R.E."/>
            <person name="Gustincich S."/>
            <person name="Harbers M."/>
            <person name="Hayashi Y."/>
            <person name="Hensch T.K."/>
            <person name="Hirokawa N."/>
            <person name="Hill D."/>
            <person name="Huminiecki L."/>
            <person name="Iacono M."/>
            <person name="Ikeo K."/>
            <person name="Iwama A."/>
            <person name="Ishikawa T."/>
            <person name="Jakt M."/>
            <person name="Kanapin A."/>
            <person name="Katoh M."/>
            <person name="Kawasawa Y."/>
            <person name="Kelso J."/>
            <person name="Kitamura H."/>
            <person name="Kitano H."/>
            <person name="Kollias G."/>
            <person name="Krishnan S.P."/>
            <person name="Kruger A."/>
            <person name="Kummerfeld S.K."/>
            <person name="Kurochkin I.V."/>
            <person name="Lareau L.F."/>
            <person name="Lazarevic D."/>
            <person name="Lipovich L."/>
            <person name="Liu J."/>
            <person name="Liuni S."/>
            <person name="McWilliam S."/>
            <person name="Madan Babu M."/>
            <person name="Madera M."/>
            <person name="Marchionni L."/>
            <person name="Matsuda H."/>
            <person name="Matsuzawa S."/>
            <person name="Miki H."/>
            <person name="Mignone F."/>
            <person name="Miyake S."/>
            <person name="Morris K."/>
            <person name="Mottagui-Tabar S."/>
            <person name="Mulder N."/>
            <person name="Nakano N."/>
            <person name="Nakauchi H."/>
            <person name="Ng P."/>
            <person name="Nilsson R."/>
            <person name="Nishiguchi S."/>
            <person name="Nishikawa S."/>
            <person name="Nori F."/>
            <person name="Ohara O."/>
            <person name="Okazaki Y."/>
            <person name="Orlando V."/>
            <person name="Pang K.C."/>
            <person name="Pavan W.J."/>
            <person name="Pavesi G."/>
            <person name="Pesole G."/>
            <person name="Petrovsky N."/>
            <person name="Piazza S."/>
            <person name="Reed J."/>
            <person name="Reid J.F."/>
            <person name="Ring B.Z."/>
            <person name="Ringwald M."/>
            <person name="Rost B."/>
            <person name="Ruan Y."/>
            <person name="Salzberg S.L."/>
            <person name="Sandelin A."/>
            <person name="Schneider C."/>
            <person name="Schoenbach C."/>
            <person name="Sekiguchi K."/>
            <person name="Semple C.A."/>
            <person name="Seno S."/>
            <person name="Sessa L."/>
            <person name="Sheng Y."/>
            <person name="Shibata Y."/>
            <person name="Shimada H."/>
            <person name="Shimada K."/>
            <person name="Silva D."/>
            <person name="Sinclair B."/>
            <person name="Sperling S."/>
            <person name="Stupka E."/>
            <person name="Sugiura K."/>
            <person name="Sultana R."/>
            <person name="Takenaka Y."/>
            <person name="Taki K."/>
            <person name="Tammoja K."/>
            <person name="Tan S.L."/>
            <person name="Tang S."/>
            <person name="Taylor M.S."/>
            <person name="Tegner J."/>
            <person name="Teichmann S.A."/>
            <person name="Ueda H.R."/>
            <person name="van Nimwegen E."/>
            <person name="Verardo R."/>
            <person name="Wei C.L."/>
            <person name="Yagi K."/>
            <person name="Yamanishi H."/>
            <person name="Zabarovsky E."/>
            <person name="Zhu S."/>
            <person name="Zimmer A."/>
            <person name="Hide W."/>
            <person name="Bult C."/>
            <person name="Grimmond S.M."/>
            <person name="Teasdale R.D."/>
            <person name="Liu E.T."/>
            <person name="Brusic V."/>
            <person name="Quackenbush J."/>
            <person name="Wahlestedt C."/>
            <person name="Mattick J.S."/>
            <person name="Hume D.A."/>
            <person name="Kai C."/>
            <person name="Sasaki D."/>
            <person name="Tomaru Y."/>
            <person name="Fukuda S."/>
            <person name="Kanamori-Katayama M."/>
            <person name="Suzuki M."/>
            <person name="Aoki J."/>
            <person name="Arakawa T."/>
            <person name="Iida J."/>
            <person name="Imamura K."/>
            <person name="Itoh M."/>
            <person name="Kato T."/>
            <person name="Kawaji H."/>
            <person name="Kawagashira N."/>
            <person name="Kawashima T."/>
            <person name="Kojima M."/>
            <person name="Kondo S."/>
            <person name="Konno H."/>
            <person name="Nakano K."/>
            <person name="Ninomiya N."/>
            <person name="Nishio T."/>
            <person name="Okada M."/>
            <person name="Plessy C."/>
            <person name="Shibata K."/>
            <person name="Shiraki T."/>
            <person name="Suzuki S."/>
            <person name="Tagami M."/>
            <person name="Waki K."/>
            <person name="Watahiki A."/>
            <person name="Okamura-Oho Y."/>
            <person name="Suzuki H."/>
            <person name="Kawai J."/>
            <person name="Hayashizaki Y."/>
        </authorList>
    </citation>
    <scope>NUCLEOTIDE SEQUENCE [LARGE SCALE MRNA] (ISOFORM 1)</scope>
    <source>
        <strain>C57BL/6J</strain>
        <tissue>Fetal kidney</tissue>
        <tissue>Thymus</tissue>
    </source>
</reference>
<reference key="3">
    <citation type="journal article" date="2004" name="Genome Res.">
        <title>The status, quality, and expansion of the NIH full-length cDNA project: the Mammalian Gene Collection (MGC).</title>
        <authorList>
            <consortium name="The MGC Project Team"/>
        </authorList>
    </citation>
    <scope>NUCLEOTIDE SEQUENCE [LARGE SCALE MRNA] (ISOFORMS 1 AND 2)</scope>
    <source>
        <strain>C57BL/6J</strain>
        <strain>Czech II</strain>
        <strain>FVB/N</strain>
        <tissue>Eye</tissue>
        <tissue>Fetal brain</tissue>
        <tissue>Mammary tumor</tissue>
    </source>
</reference>
<reference key="4">
    <citation type="journal article" date="2009" name="Immunity">
        <title>The phagosomal proteome in interferon-gamma-activated macrophages.</title>
        <authorList>
            <person name="Trost M."/>
            <person name="English L."/>
            <person name="Lemieux S."/>
            <person name="Courcelles M."/>
            <person name="Desjardins M."/>
            <person name="Thibault P."/>
        </authorList>
    </citation>
    <scope>PHOSPHORYLATION [LARGE SCALE ANALYSIS] AT SER-624</scope>
    <scope>IDENTIFICATION BY MASS SPECTROMETRY [LARGE SCALE ANALYSIS]</scope>
</reference>
<reference key="5">
    <citation type="journal article" date="2010" name="Cell">
        <title>A tissue-specific atlas of mouse protein phosphorylation and expression.</title>
        <authorList>
            <person name="Huttlin E.L."/>
            <person name="Jedrychowski M.P."/>
            <person name="Elias J.E."/>
            <person name="Goswami T."/>
            <person name="Rad R."/>
            <person name="Beausoleil S.A."/>
            <person name="Villen J."/>
            <person name="Haas W."/>
            <person name="Sowa M.E."/>
            <person name="Gygi S.P."/>
        </authorList>
    </citation>
    <scope>PHOSPHORYLATION [LARGE SCALE ANALYSIS] AT SER-78; SER-621 AND SER-624</scope>
    <scope>IDENTIFICATION BY MASS SPECTROMETRY [LARGE SCALE ANALYSIS]</scope>
    <source>
        <tissue>Brain</tissue>
        <tissue>Heart</tissue>
        <tissue>Kidney</tissue>
        <tissue>Liver</tissue>
        <tissue>Lung</tissue>
        <tissue>Pancreas</tissue>
        <tissue>Spleen</tissue>
        <tissue>Testis</tissue>
    </source>
</reference>
<reference key="6">
    <citation type="journal article" date="2006" name="Eur. J. Immunol.">
        <title>Distinct orientation of the alloreactive monoclonal CD8 T cell activation program by three different peptide/MHC complexes.</title>
        <authorList>
            <person name="Auphan-Anezin N."/>
            <person name="Mazza C."/>
            <person name="Guimezanes A."/>
            <person name="Barrett-Wilt G.A."/>
            <person name="Montero-Julian F."/>
            <person name="Roussel A."/>
            <person name="Hunt D.F."/>
            <person name="Malissen B."/>
            <person name="Schmitt-Verhulst A.-M."/>
        </authorList>
    </citation>
    <scope>X-RAY CRYSTALLOGRAPHY (1.9 ANGSTROMS) OF 484-491 IN COMPLEX WITH B2M AND H2-K1</scope>
</reference>
<protein>
    <recommendedName>
        <fullName>RNA-binding protein 5</fullName>
    </recommendedName>
    <alternativeName>
        <fullName>Putative tumor suppressor LUCA15</fullName>
    </alternativeName>
    <alternativeName>
        <fullName>RNA-binding motif protein 5</fullName>
    </alternativeName>
</protein>
<organism>
    <name type="scientific">Mus musculus</name>
    <name type="common">Mouse</name>
    <dbReference type="NCBI Taxonomy" id="10090"/>
    <lineage>
        <taxon>Eukaryota</taxon>
        <taxon>Metazoa</taxon>
        <taxon>Chordata</taxon>
        <taxon>Craniata</taxon>
        <taxon>Vertebrata</taxon>
        <taxon>Euteleostomi</taxon>
        <taxon>Mammalia</taxon>
        <taxon>Eutheria</taxon>
        <taxon>Euarchontoglires</taxon>
        <taxon>Glires</taxon>
        <taxon>Rodentia</taxon>
        <taxon>Myomorpha</taxon>
        <taxon>Muroidea</taxon>
        <taxon>Muridae</taxon>
        <taxon>Murinae</taxon>
        <taxon>Mus</taxon>
        <taxon>Mus</taxon>
    </lineage>
</organism>
<feature type="chain" id="PRO_0000253050" description="RNA-binding protein 5">
    <location>
        <begin position="1"/>
        <end position="815"/>
    </location>
</feature>
<feature type="domain" description="RRM 1" evidence="5">
    <location>
        <begin position="98"/>
        <end position="178"/>
    </location>
</feature>
<feature type="domain" description="RRM 2" evidence="5">
    <location>
        <begin position="231"/>
        <end position="315"/>
    </location>
</feature>
<feature type="domain" description="G-patch" evidence="4">
    <location>
        <begin position="743"/>
        <end position="789"/>
    </location>
</feature>
<feature type="zinc finger region" description="RanBP2-type" evidence="6">
    <location>
        <begin position="181"/>
        <end position="210"/>
    </location>
</feature>
<feature type="zinc finger region" description="C2H2-type" evidence="3">
    <location>
        <begin position="647"/>
        <end position="672"/>
    </location>
</feature>
<feature type="region of interest" description="Disordered" evidence="7">
    <location>
        <begin position="1"/>
        <end position="93"/>
    </location>
</feature>
<feature type="region of interest" description="Required for interaction with U2AF2" evidence="1">
    <location>
        <begin position="321"/>
        <end position="809"/>
    </location>
</feature>
<feature type="region of interest" description="Disordered" evidence="7">
    <location>
        <begin position="385"/>
        <end position="468"/>
    </location>
</feature>
<feature type="region of interest" description="Sufficient for interaction with ACIN1, PRPF8, SFRS3, SNRPB, SNRPN, SNRNP70 and SNRNP200" evidence="1">
    <location>
        <begin position="452"/>
        <end position="535"/>
    </location>
</feature>
<feature type="region of interest" description="Disordered" evidence="7">
    <location>
        <begin position="508"/>
        <end position="539"/>
    </location>
</feature>
<feature type="compositionally biased region" description="Low complexity" evidence="7">
    <location>
        <begin position="393"/>
        <end position="410"/>
    </location>
</feature>
<feature type="compositionally biased region" description="Polar residues" evidence="7">
    <location>
        <begin position="411"/>
        <end position="422"/>
    </location>
</feature>
<feature type="compositionally biased region" description="Low complexity" evidence="7">
    <location>
        <begin position="426"/>
        <end position="446"/>
    </location>
</feature>
<feature type="modified residue" description="Phosphoserine" evidence="2">
    <location>
        <position position="18"/>
    </location>
</feature>
<feature type="modified residue" description="Phosphoserine" evidence="2">
    <location>
        <position position="59"/>
    </location>
</feature>
<feature type="modified residue" description="Phosphoserine" evidence="2">
    <location>
        <position position="69"/>
    </location>
</feature>
<feature type="modified residue" description="Phosphoserine" evidence="2">
    <location>
        <position position="72"/>
    </location>
</feature>
<feature type="modified residue" description="Phosphoserine" evidence="11">
    <location>
        <position position="78"/>
    </location>
</feature>
<feature type="modified residue" description="Phosphoserine" evidence="2">
    <location>
        <position position="444"/>
    </location>
</feature>
<feature type="modified residue" description="Phosphoserine" evidence="11">
    <location>
        <position position="621"/>
    </location>
</feature>
<feature type="modified residue" description="Phosphoserine" evidence="10 11">
    <location>
        <position position="624"/>
    </location>
</feature>
<feature type="splice variant" id="VSP_021003" description="In isoform 2." evidence="8">
    <location>
        <position position="455"/>
    </location>
</feature>
<feature type="sequence conflict" description="In Ref. 2; BAE22042." evidence="9" ref="2">
    <original>Q</original>
    <variation>K</variation>
    <location>
        <position position="272"/>
    </location>
</feature>
<feature type="sequence conflict" description="In Ref. 2; BAE22042." evidence="9" ref="2">
    <original>E</original>
    <variation>G</variation>
    <location>
        <position position="693"/>
    </location>
</feature>
<feature type="sequence conflict" description="In Ref. 2; BAE22042." evidence="9" ref="2">
    <original>F</original>
    <variation>L</variation>
    <location>
        <position position="726"/>
    </location>
</feature>
<feature type="sequence conflict" description="In Ref. 2; BAE22042." evidence="9" ref="2">
    <original>S</original>
    <variation>P</variation>
    <location>
        <position position="798"/>
    </location>
</feature>
<proteinExistence type="evidence at protein level"/>